<dbReference type="EC" id="4.4.1.21" evidence="1"/>
<dbReference type="EMBL" id="DQ489736">
    <property type="protein sequence ID" value="ACA83300.1"/>
    <property type="molecule type" value="Genomic_DNA"/>
</dbReference>
<dbReference type="RefSeq" id="WP_004899110.1">
    <property type="nucleotide sequence ID" value="NC_010471.1"/>
</dbReference>
<dbReference type="SMR" id="B1MVP6"/>
<dbReference type="STRING" id="349519.LCK_01476"/>
<dbReference type="KEGG" id="lci:LCK_01476"/>
<dbReference type="eggNOG" id="COG1854">
    <property type="taxonomic scope" value="Bacteria"/>
</dbReference>
<dbReference type="HOGENOM" id="CLU_107531_2_1_9"/>
<dbReference type="OrthoDB" id="9788129at2"/>
<dbReference type="Proteomes" id="UP000002166">
    <property type="component" value="Chromosome"/>
</dbReference>
<dbReference type="GO" id="GO:0005506">
    <property type="term" value="F:iron ion binding"/>
    <property type="evidence" value="ECO:0007669"/>
    <property type="project" value="InterPro"/>
</dbReference>
<dbReference type="GO" id="GO:0043768">
    <property type="term" value="F:S-ribosylhomocysteine lyase activity"/>
    <property type="evidence" value="ECO:0007669"/>
    <property type="project" value="UniProtKB-UniRule"/>
</dbReference>
<dbReference type="GO" id="GO:0009372">
    <property type="term" value="P:quorum sensing"/>
    <property type="evidence" value="ECO:0007669"/>
    <property type="project" value="UniProtKB-UniRule"/>
</dbReference>
<dbReference type="Gene3D" id="3.30.1360.80">
    <property type="entry name" value="S-ribosylhomocysteinase (LuxS)"/>
    <property type="match status" value="1"/>
</dbReference>
<dbReference type="HAMAP" id="MF_00091">
    <property type="entry name" value="LuxS"/>
    <property type="match status" value="1"/>
</dbReference>
<dbReference type="InterPro" id="IPR037005">
    <property type="entry name" value="LuxS_sf"/>
</dbReference>
<dbReference type="InterPro" id="IPR011249">
    <property type="entry name" value="Metalloenz_LuxS/M16"/>
</dbReference>
<dbReference type="InterPro" id="IPR003815">
    <property type="entry name" value="S-ribosylhomocysteinase"/>
</dbReference>
<dbReference type="NCBIfam" id="NF002611">
    <property type="entry name" value="PRK02260.3-4"/>
    <property type="match status" value="1"/>
</dbReference>
<dbReference type="PANTHER" id="PTHR35799">
    <property type="entry name" value="S-RIBOSYLHOMOCYSTEINE LYASE"/>
    <property type="match status" value="1"/>
</dbReference>
<dbReference type="PANTHER" id="PTHR35799:SF1">
    <property type="entry name" value="S-RIBOSYLHOMOCYSTEINE LYASE"/>
    <property type="match status" value="1"/>
</dbReference>
<dbReference type="Pfam" id="PF02664">
    <property type="entry name" value="LuxS"/>
    <property type="match status" value="1"/>
</dbReference>
<dbReference type="PIRSF" id="PIRSF006160">
    <property type="entry name" value="AI2"/>
    <property type="match status" value="1"/>
</dbReference>
<dbReference type="PRINTS" id="PR01487">
    <property type="entry name" value="LUXSPROTEIN"/>
</dbReference>
<dbReference type="SUPFAM" id="SSF63411">
    <property type="entry name" value="LuxS/MPP-like metallohydrolase"/>
    <property type="match status" value="1"/>
</dbReference>
<keyword id="KW-0071">Autoinducer synthesis</keyword>
<keyword id="KW-0408">Iron</keyword>
<keyword id="KW-0456">Lyase</keyword>
<keyword id="KW-0479">Metal-binding</keyword>
<keyword id="KW-0673">Quorum sensing</keyword>
<keyword id="KW-1185">Reference proteome</keyword>
<feature type="chain" id="PRO_1000093316" description="S-ribosylhomocysteine lyase">
    <location>
        <begin position="1"/>
        <end position="158"/>
    </location>
</feature>
<feature type="binding site" evidence="1">
    <location>
        <position position="56"/>
    </location>
    <ligand>
        <name>Fe cation</name>
        <dbReference type="ChEBI" id="CHEBI:24875"/>
    </ligand>
</feature>
<feature type="binding site" evidence="1">
    <location>
        <position position="60"/>
    </location>
    <ligand>
        <name>Fe cation</name>
        <dbReference type="ChEBI" id="CHEBI:24875"/>
    </ligand>
</feature>
<feature type="binding site" evidence="1">
    <location>
        <position position="125"/>
    </location>
    <ligand>
        <name>Fe cation</name>
        <dbReference type="ChEBI" id="CHEBI:24875"/>
    </ligand>
</feature>
<accession>B1MVP6</accession>
<proteinExistence type="inferred from homology"/>
<protein>
    <recommendedName>
        <fullName evidence="1">S-ribosylhomocysteine lyase</fullName>
        <ecNumber evidence="1">4.4.1.21</ecNumber>
    </recommendedName>
    <alternativeName>
        <fullName evidence="1">AI-2 synthesis protein</fullName>
    </alternativeName>
    <alternativeName>
        <fullName evidence="1">Autoinducer-2 production protein LuxS</fullName>
    </alternativeName>
</protein>
<name>LUXS_LEUCK</name>
<reference key="1">
    <citation type="journal article" date="2008" name="J. Bacteriol.">
        <title>Complete genome sequence of Leuconostoc citreum KM20.</title>
        <authorList>
            <person name="Kim J.F."/>
            <person name="Jeong H."/>
            <person name="Lee J.-S."/>
            <person name="Choi S.-H."/>
            <person name="Ha M."/>
            <person name="Hur C.-G."/>
            <person name="Kim J.-S."/>
            <person name="Lee S."/>
            <person name="Park H.-S."/>
            <person name="Park Y.-H."/>
            <person name="Oh T.K."/>
        </authorList>
    </citation>
    <scope>NUCLEOTIDE SEQUENCE [LARGE SCALE GENOMIC DNA]</scope>
    <source>
        <strain>KM20</strain>
    </source>
</reference>
<gene>
    <name evidence="1" type="primary">luxS</name>
    <name type="ordered locus">LCK_01476</name>
</gene>
<evidence type="ECO:0000255" key="1">
    <source>
        <dbReference type="HAMAP-Rule" id="MF_00091"/>
    </source>
</evidence>
<sequence length="158" mass="17462">MSETVVESFTLDHTKVKAPYVRVIETQSGPNGGTITNYDLRLTQPNETAIETGGLHTLEHLFAGLVRDEIDGIIDMSPFGCRTGFHVISWVNYDSETLAKVFKKVLEKIASDDITEVPAAEIESCGNYKDHSLHSAKEWAKLILAQGISSDAFERHVV</sequence>
<comment type="function">
    <text evidence="1">Involved in the synthesis of autoinducer 2 (AI-2) which is secreted by bacteria and is used to communicate both the cell density and the metabolic potential of the environment. The regulation of gene expression in response to changes in cell density is called quorum sensing. Catalyzes the transformation of S-ribosylhomocysteine (RHC) to homocysteine (HC) and 4,5-dihydroxy-2,3-pentadione (DPD).</text>
</comment>
<comment type="catalytic activity">
    <reaction evidence="1">
        <text>S-(5-deoxy-D-ribos-5-yl)-L-homocysteine = (S)-4,5-dihydroxypentane-2,3-dione + L-homocysteine</text>
        <dbReference type="Rhea" id="RHEA:17753"/>
        <dbReference type="ChEBI" id="CHEBI:29484"/>
        <dbReference type="ChEBI" id="CHEBI:58195"/>
        <dbReference type="ChEBI" id="CHEBI:58199"/>
        <dbReference type="EC" id="4.4.1.21"/>
    </reaction>
</comment>
<comment type="cofactor">
    <cofactor evidence="1">
        <name>Fe cation</name>
        <dbReference type="ChEBI" id="CHEBI:24875"/>
    </cofactor>
    <text evidence="1">Binds 1 Fe cation per subunit.</text>
</comment>
<comment type="subunit">
    <text evidence="1">Homodimer.</text>
</comment>
<comment type="similarity">
    <text evidence="1">Belongs to the LuxS family.</text>
</comment>
<organism>
    <name type="scientific">Leuconostoc citreum (strain KM20)</name>
    <dbReference type="NCBI Taxonomy" id="349519"/>
    <lineage>
        <taxon>Bacteria</taxon>
        <taxon>Bacillati</taxon>
        <taxon>Bacillota</taxon>
        <taxon>Bacilli</taxon>
        <taxon>Lactobacillales</taxon>
        <taxon>Lactobacillaceae</taxon>
        <taxon>Leuconostoc</taxon>
    </lineage>
</organism>